<comment type="function">
    <text evidence="3">Antagonist of the alpha-2 subunit of the integrin alpha-2/beta-1 (ITGA2/ITGB1) on human platelets and endothelial cells. This protein inhibits collagen-stimulated activation of human platelets in a dose-dependent manner. In addition, it antagonizes the binding of monoclonal antibodies against the alpha-2 subunit of integrin alpha-2/beta-1 to platelets and it coimmunoprecipitates with this integrin.</text>
</comment>
<comment type="subunit">
    <text evidence="1">Heterodimer; disulfide-linked.</text>
</comment>
<comment type="subcellular location">
    <subcellularLocation>
        <location>Secreted</location>
    </subcellularLocation>
</comment>
<comment type="tissue specificity">
    <text>Expressed by the venom gland.</text>
</comment>
<comment type="miscellaneous">
    <text evidence="5">Negative results: does not block the glycoprotein VI (GP6) and does not inhibit platelet activation induced by ADP-, and thrombin.</text>
</comment>
<comment type="similarity">
    <text evidence="4">Belongs to the snaclec family.</text>
</comment>
<protein>
    <recommendedName>
        <fullName>Snaclec rhinocetin subunit beta</fullName>
    </recommendedName>
    <alternativeName>
        <fullName>C-type lectin like protein 2</fullName>
    </alternativeName>
</protein>
<keyword id="KW-0903">Direct protein sequencing</keyword>
<keyword id="KW-1015">Disulfide bond</keyword>
<keyword id="KW-1199">Hemostasis impairing toxin</keyword>
<keyword id="KW-1201">Platelet aggregation inhibiting toxin</keyword>
<keyword id="KW-0964">Secreted</keyword>
<keyword id="KW-0732">Signal</keyword>
<keyword id="KW-0800">Toxin</keyword>
<proteinExistence type="evidence at protein level"/>
<evidence type="ECO:0000250" key="1"/>
<evidence type="ECO:0000255" key="2">
    <source>
        <dbReference type="PROSITE-ProRule" id="PRU00040"/>
    </source>
</evidence>
<evidence type="ECO:0000269" key="3">
    <source>
    </source>
</evidence>
<evidence type="ECO:0000305" key="4"/>
<evidence type="ECO:0000305" key="5">
    <source>
    </source>
</evidence>
<name>SLRB_BITRH</name>
<feature type="signal peptide" evidence="3">
    <location>
        <begin position="1"/>
        <end position="23"/>
    </location>
</feature>
<feature type="chain" id="PRO_0000422546" description="Snaclec rhinocetin subunit beta">
    <location>
        <begin position="24"/>
        <end position="150"/>
    </location>
</feature>
<feature type="domain" description="C-type lectin" evidence="2">
    <location>
        <begin position="34"/>
        <end position="145"/>
    </location>
</feature>
<feature type="disulfide bond" evidence="2">
    <location>
        <begin position="27"/>
        <end position="38"/>
    </location>
</feature>
<feature type="disulfide bond" evidence="2">
    <location>
        <begin position="55"/>
        <end position="144"/>
    </location>
</feature>
<feature type="disulfide bond" description="Interchain (with C-104 in alpha chain)" evidence="2">
    <location>
        <position position="100"/>
    </location>
</feature>
<feature type="disulfide bond" evidence="2">
    <location>
        <begin position="121"/>
        <end position="136"/>
    </location>
</feature>
<accession>I7ICN3</accession>
<organism>
    <name type="scientific">Bitis rhinoceros</name>
    <name type="common">West African gaboon viper</name>
    <name type="synonym">Vipera rhinoceros</name>
    <dbReference type="NCBI Taxonomy" id="715877"/>
    <lineage>
        <taxon>Eukaryota</taxon>
        <taxon>Metazoa</taxon>
        <taxon>Chordata</taxon>
        <taxon>Craniata</taxon>
        <taxon>Vertebrata</taxon>
        <taxon>Euteleostomi</taxon>
        <taxon>Lepidosauria</taxon>
        <taxon>Squamata</taxon>
        <taxon>Bifurcata</taxon>
        <taxon>Unidentata</taxon>
        <taxon>Episquamata</taxon>
        <taxon>Toxicofera</taxon>
        <taxon>Serpentes</taxon>
        <taxon>Colubroidea</taxon>
        <taxon>Viperidae</taxon>
        <taxon>Viperinae</taxon>
        <taxon>Bitis</taxon>
    </lineage>
</organism>
<reference key="1">
    <citation type="journal article" date="2012" name="J. Biol. Chem.">
        <title>Rhinocetin, a venom-derived integrin-specific antagonist inhibits collagen-induced platelet and endothelial cell functions.</title>
        <authorList>
            <person name="Vaiyapuri S."/>
            <person name="Hutchinson E.G."/>
            <person name="Ali M.S."/>
            <person name="Dannoura A."/>
            <person name="Stanley R.G."/>
            <person name="Harrison R.A."/>
            <person name="Bicknell A.B."/>
            <person name="Gibbins J.M."/>
        </authorList>
    </citation>
    <scope>NUCLEOTIDE SEQUENCE [MRNA]</scope>
    <scope>PROTEIN SEQUENCE OF 24-33</scope>
    <scope>FUNCTION</scope>
    <scope>IDENTIFICATION BY MASS SPECTROMETRY</scope>
    <source>
        <tissue>Venom</tissue>
        <tissue>Venom gland</tissue>
    </source>
</reference>
<sequence>MGRFIFLSSGLLVVFLSLSGTGADQGCLPDWTLYEGYCYKVFKEKKTWADAEKFCKEQANGGHLVSLQSSEEVDFMVHQTFPILRYDFVWIGLSDFSRDCQWKWSDYSKLFYKAWNNEPNCFVCKTTDNQWLRRDCNRQQYFVCKSRVPR</sequence>
<dbReference type="EMBL" id="HE800430">
    <property type="protein sequence ID" value="CCH15162.1"/>
    <property type="molecule type" value="mRNA"/>
</dbReference>
<dbReference type="SMR" id="I7ICN3"/>
<dbReference type="GO" id="GO:0005576">
    <property type="term" value="C:extracellular region"/>
    <property type="evidence" value="ECO:0007669"/>
    <property type="project" value="UniProtKB-SubCell"/>
</dbReference>
<dbReference type="GO" id="GO:0090729">
    <property type="term" value="F:toxin activity"/>
    <property type="evidence" value="ECO:0007669"/>
    <property type="project" value="UniProtKB-KW"/>
</dbReference>
<dbReference type="FunFam" id="3.10.100.10:FF:000087">
    <property type="entry name" value="Snaclec rhodocetin subunit delta"/>
    <property type="match status" value="1"/>
</dbReference>
<dbReference type="Gene3D" id="3.10.100.10">
    <property type="entry name" value="Mannose-Binding Protein A, subunit A"/>
    <property type="match status" value="1"/>
</dbReference>
<dbReference type="InterPro" id="IPR001304">
    <property type="entry name" value="C-type_lectin-like"/>
</dbReference>
<dbReference type="InterPro" id="IPR016186">
    <property type="entry name" value="C-type_lectin-like/link_sf"/>
</dbReference>
<dbReference type="InterPro" id="IPR050111">
    <property type="entry name" value="C-type_lectin/snaclec_domain"/>
</dbReference>
<dbReference type="InterPro" id="IPR018378">
    <property type="entry name" value="C-type_lectin_CS"/>
</dbReference>
<dbReference type="InterPro" id="IPR016187">
    <property type="entry name" value="CTDL_fold"/>
</dbReference>
<dbReference type="PANTHER" id="PTHR22803">
    <property type="entry name" value="MANNOSE, PHOSPHOLIPASE, LECTIN RECEPTOR RELATED"/>
    <property type="match status" value="1"/>
</dbReference>
<dbReference type="Pfam" id="PF00059">
    <property type="entry name" value="Lectin_C"/>
    <property type="match status" value="1"/>
</dbReference>
<dbReference type="PRINTS" id="PR01504">
    <property type="entry name" value="PNCREATITSAP"/>
</dbReference>
<dbReference type="SMART" id="SM00034">
    <property type="entry name" value="CLECT"/>
    <property type="match status" value="1"/>
</dbReference>
<dbReference type="SUPFAM" id="SSF56436">
    <property type="entry name" value="C-type lectin-like"/>
    <property type="match status" value="1"/>
</dbReference>
<dbReference type="PROSITE" id="PS00615">
    <property type="entry name" value="C_TYPE_LECTIN_1"/>
    <property type="match status" value="1"/>
</dbReference>
<dbReference type="PROSITE" id="PS50041">
    <property type="entry name" value="C_TYPE_LECTIN_2"/>
    <property type="match status" value="1"/>
</dbReference>